<reference key="1">
    <citation type="journal article" date="1992" name="J. Bacteriol.">
        <title>Histidine biosynthesis genes in Lactococcus lactis subsp. lactis.</title>
        <authorList>
            <person name="Delorme C."/>
            <person name="Ehrlich S.D."/>
            <person name="Renault P."/>
        </authorList>
    </citation>
    <scope>NUCLEOTIDE SEQUENCE [GENOMIC DNA]</scope>
    <source>
        <strain>NCDO 2118</strain>
    </source>
</reference>
<reference key="2">
    <citation type="journal article" date="2001" name="Genome Res.">
        <title>The complete genome sequence of the lactic acid bacterium Lactococcus lactis ssp. lactis IL1403.</title>
        <authorList>
            <person name="Bolotin A."/>
            <person name="Wincker P."/>
            <person name="Mauger S."/>
            <person name="Jaillon O."/>
            <person name="Malarme K."/>
            <person name="Weissenbach J."/>
            <person name="Ehrlich S.D."/>
            <person name="Sorokin A."/>
        </authorList>
    </citation>
    <scope>NUCLEOTIDE SEQUENCE [LARGE SCALE GENOMIC DNA]</scope>
    <source>
        <strain>IL1403</strain>
    </source>
</reference>
<proteinExistence type="inferred from homology"/>
<evidence type="ECO:0000250" key="1"/>
<evidence type="ECO:0000305" key="2"/>
<sequence>MKKIVIIDYNIGNLQSVQAAFLRLGQETVISRDLEEIRKADALILPGVGAFPTAMNNLKKFNLIELIQERAAAGIPILGICLGMQVLFEKGYEIEERQGLGLLKGEVIPIKTNEKIPHMGWNQLNLAKASPTTHYLSDNDEVYFVHSYQATCPDDELIAYTTYGEVKIPAIVGKNNVIGCQFHPEKSGEIGRKVLKAFLEEI</sequence>
<feature type="chain" id="PRO_0000152381" description="Imidazole glycerol phosphate synthase subunit HisH">
    <location>
        <begin position="1"/>
        <end position="202"/>
    </location>
</feature>
<feature type="domain" description="Glutamine amidotransferase type-1">
    <location>
        <begin position="3"/>
        <end position="202"/>
    </location>
</feature>
<feature type="active site" description="Nucleophile" evidence="1">
    <location>
        <position position="81"/>
    </location>
</feature>
<feature type="active site" evidence="1">
    <location>
        <position position="183"/>
    </location>
</feature>
<feature type="active site" evidence="1">
    <location>
        <position position="185"/>
    </location>
</feature>
<feature type="sequence conflict" description="In Ref. 1; AAB81907." evidence="2" ref="1">
    <original>A</original>
    <variation>T</variation>
    <location>
        <position position="129"/>
    </location>
</feature>
<feature type="sequence conflict" description="In Ref. 1; AAB81907." evidence="2" ref="1">
    <original>D</original>
    <variation>G</variation>
    <location>
        <position position="138"/>
    </location>
</feature>
<feature type="sequence conflict" description="In Ref. 1; AAB81907." evidence="2" ref="1">
    <original>V</original>
    <variation>I</variation>
    <location>
        <position position="194"/>
    </location>
</feature>
<comment type="function">
    <text evidence="1">IGPS catalyzes the conversion of PRFAR and glutamine to IGP, AICAR and glutamate. The HisH subunit catalyzes the hydrolysis of glutamine to glutamate and ammonia as part of the synthesis of IGP and AICAR. The resulting ammonia molecule is channeled to the active site of HisF (By similarity).</text>
</comment>
<comment type="catalytic activity">
    <reaction>
        <text>5-[(5-phospho-1-deoxy-D-ribulos-1-ylimino)methylamino]-1-(5-phospho-beta-D-ribosyl)imidazole-4-carboxamide + L-glutamine = D-erythro-1-(imidazol-4-yl)glycerol 3-phosphate + 5-amino-1-(5-phospho-beta-D-ribosyl)imidazole-4-carboxamide + L-glutamate + H(+)</text>
        <dbReference type="Rhea" id="RHEA:24793"/>
        <dbReference type="ChEBI" id="CHEBI:15378"/>
        <dbReference type="ChEBI" id="CHEBI:29985"/>
        <dbReference type="ChEBI" id="CHEBI:58278"/>
        <dbReference type="ChEBI" id="CHEBI:58359"/>
        <dbReference type="ChEBI" id="CHEBI:58475"/>
        <dbReference type="ChEBI" id="CHEBI:58525"/>
        <dbReference type="EC" id="4.3.2.10"/>
    </reaction>
</comment>
<comment type="catalytic activity">
    <reaction>
        <text>L-glutamine + H2O = L-glutamate + NH4(+)</text>
        <dbReference type="Rhea" id="RHEA:15889"/>
        <dbReference type="ChEBI" id="CHEBI:15377"/>
        <dbReference type="ChEBI" id="CHEBI:28938"/>
        <dbReference type="ChEBI" id="CHEBI:29985"/>
        <dbReference type="ChEBI" id="CHEBI:58359"/>
        <dbReference type="EC" id="3.5.1.2"/>
    </reaction>
</comment>
<comment type="pathway">
    <text>Amino-acid biosynthesis; L-histidine biosynthesis; L-histidine from 5-phospho-alpha-D-ribose 1-diphosphate: step 5/9.</text>
</comment>
<comment type="subunit">
    <text evidence="1">Heterodimer of HisH and HisF.</text>
</comment>
<comment type="subcellular location">
    <subcellularLocation>
        <location evidence="1">Cytoplasm</location>
    </subcellularLocation>
</comment>
<organism>
    <name type="scientific">Lactococcus lactis subsp. lactis (strain IL1403)</name>
    <name type="common">Streptococcus lactis</name>
    <dbReference type="NCBI Taxonomy" id="272623"/>
    <lineage>
        <taxon>Bacteria</taxon>
        <taxon>Bacillati</taxon>
        <taxon>Bacillota</taxon>
        <taxon>Bacilli</taxon>
        <taxon>Lactobacillales</taxon>
        <taxon>Streptococcaceae</taxon>
        <taxon>Lactococcus</taxon>
    </lineage>
</organism>
<protein>
    <recommendedName>
        <fullName>Imidazole glycerol phosphate synthase subunit HisH</fullName>
        <ecNumber>4.3.2.10</ecNumber>
    </recommendedName>
    <alternativeName>
        <fullName>IGP synthase glutaminase subunit</fullName>
        <ecNumber>3.5.1.2</ecNumber>
    </alternativeName>
    <alternativeName>
        <fullName>IGP synthase subunit HisH</fullName>
    </alternativeName>
    <alternativeName>
        <fullName>ImGP synthase subunit HisH</fullName>
        <shortName>IGPS subunit HisH</shortName>
    </alternativeName>
</protein>
<dbReference type="EC" id="4.3.2.10"/>
<dbReference type="EC" id="3.5.1.2"/>
<dbReference type="EMBL" id="U92974">
    <property type="protein sequence ID" value="AAB81907.1"/>
    <property type="molecule type" value="Genomic_DNA"/>
</dbReference>
<dbReference type="EMBL" id="AE005176">
    <property type="protein sequence ID" value="AAK05310.1"/>
    <property type="molecule type" value="Genomic_DNA"/>
</dbReference>
<dbReference type="PIR" id="D86776">
    <property type="entry name" value="D86776"/>
</dbReference>
<dbReference type="PIR" id="I45734">
    <property type="entry name" value="I45734"/>
</dbReference>
<dbReference type="RefSeq" id="NP_267368.1">
    <property type="nucleotide sequence ID" value="NC_002662.1"/>
</dbReference>
<dbReference type="RefSeq" id="WP_010905832.1">
    <property type="nucleotide sequence ID" value="NC_002662.1"/>
</dbReference>
<dbReference type="SMR" id="Q02132"/>
<dbReference type="MEROPS" id="C26.965"/>
<dbReference type="PaxDb" id="272623-L0069"/>
<dbReference type="EnsemblBacteria" id="AAK05310">
    <property type="protein sequence ID" value="AAK05310"/>
    <property type="gene ID" value="L0069"/>
</dbReference>
<dbReference type="KEGG" id="lla:L0069"/>
<dbReference type="PATRIC" id="fig|272623.7.peg.1309"/>
<dbReference type="eggNOG" id="COG0118">
    <property type="taxonomic scope" value="Bacteria"/>
</dbReference>
<dbReference type="HOGENOM" id="CLU_071837_2_2_9"/>
<dbReference type="OrthoDB" id="9807137at2"/>
<dbReference type="UniPathway" id="UPA00031">
    <property type="reaction ID" value="UER00010"/>
</dbReference>
<dbReference type="Proteomes" id="UP000002196">
    <property type="component" value="Chromosome"/>
</dbReference>
<dbReference type="GO" id="GO:0005737">
    <property type="term" value="C:cytoplasm"/>
    <property type="evidence" value="ECO:0007669"/>
    <property type="project" value="UniProtKB-SubCell"/>
</dbReference>
<dbReference type="GO" id="GO:0004359">
    <property type="term" value="F:glutaminase activity"/>
    <property type="evidence" value="ECO:0007669"/>
    <property type="project" value="UniProtKB-EC"/>
</dbReference>
<dbReference type="GO" id="GO:0000107">
    <property type="term" value="F:imidazoleglycerol-phosphate synthase activity"/>
    <property type="evidence" value="ECO:0007669"/>
    <property type="project" value="UniProtKB-UniRule"/>
</dbReference>
<dbReference type="GO" id="GO:0016829">
    <property type="term" value="F:lyase activity"/>
    <property type="evidence" value="ECO:0007669"/>
    <property type="project" value="UniProtKB-KW"/>
</dbReference>
<dbReference type="GO" id="GO:0000105">
    <property type="term" value="P:L-histidine biosynthetic process"/>
    <property type="evidence" value="ECO:0007669"/>
    <property type="project" value="UniProtKB-UniRule"/>
</dbReference>
<dbReference type="CDD" id="cd01748">
    <property type="entry name" value="GATase1_IGP_Synthase"/>
    <property type="match status" value="1"/>
</dbReference>
<dbReference type="Gene3D" id="3.40.50.880">
    <property type="match status" value="1"/>
</dbReference>
<dbReference type="HAMAP" id="MF_00278">
    <property type="entry name" value="HisH"/>
    <property type="match status" value="1"/>
</dbReference>
<dbReference type="InterPro" id="IPR029062">
    <property type="entry name" value="Class_I_gatase-like"/>
</dbReference>
<dbReference type="InterPro" id="IPR017926">
    <property type="entry name" value="GATASE"/>
</dbReference>
<dbReference type="InterPro" id="IPR010139">
    <property type="entry name" value="Imidazole-glycPsynth_HisH"/>
</dbReference>
<dbReference type="NCBIfam" id="TIGR01855">
    <property type="entry name" value="IMP_synth_hisH"/>
    <property type="match status" value="1"/>
</dbReference>
<dbReference type="PANTHER" id="PTHR42701">
    <property type="entry name" value="IMIDAZOLE GLYCEROL PHOSPHATE SYNTHASE SUBUNIT HISH"/>
    <property type="match status" value="1"/>
</dbReference>
<dbReference type="PANTHER" id="PTHR42701:SF1">
    <property type="entry name" value="IMIDAZOLE GLYCEROL PHOSPHATE SYNTHASE SUBUNIT HISH"/>
    <property type="match status" value="1"/>
</dbReference>
<dbReference type="Pfam" id="PF00117">
    <property type="entry name" value="GATase"/>
    <property type="match status" value="1"/>
</dbReference>
<dbReference type="PIRSF" id="PIRSF000495">
    <property type="entry name" value="Amidotransf_hisH"/>
    <property type="match status" value="1"/>
</dbReference>
<dbReference type="SUPFAM" id="SSF52317">
    <property type="entry name" value="Class I glutamine amidotransferase-like"/>
    <property type="match status" value="1"/>
</dbReference>
<dbReference type="PROSITE" id="PS51273">
    <property type="entry name" value="GATASE_TYPE_1"/>
    <property type="match status" value="1"/>
</dbReference>
<gene>
    <name type="primary">hisH</name>
    <name type="ordered locus">LL1212</name>
    <name type="ORF">L0069</name>
</gene>
<keyword id="KW-0028">Amino-acid biosynthesis</keyword>
<keyword id="KW-0963">Cytoplasm</keyword>
<keyword id="KW-0315">Glutamine amidotransferase</keyword>
<keyword id="KW-0368">Histidine biosynthesis</keyword>
<keyword id="KW-0378">Hydrolase</keyword>
<keyword id="KW-0456">Lyase</keyword>
<keyword id="KW-1185">Reference proteome</keyword>
<name>HIS5_LACLA</name>
<accession>Q02132</accession>
<accession>Q9CG92</accession>